<gene>
    <name evidence="1" type="primary">rplF</name>
    <name type="ordered locus">LCA_1750</name>
</gene>
<keyword id="KW-1185">Reference proteome</keyword>
<keyword id="KW-0687">Ribonucleoprotein</keyword>
<keyword id="KW-0689">Ribosomal protein</keyword>
<keyword id="KW-0694">RNA-binding</keyword>
<keyword id="KW-0699">rRNA-binding</keyword>
<accession>Q38US6</accession>
<evidence type="ECO:0000255" key="1">
    <source>
        <dbReference type="HAMAP-Rule" id="MF_01365"/>
    </source>
</evidence>
<evidence type="ECO:0000305" key="2"/>
<feature type="chain" id="PRO_0000260882" description="Large ribosomal subunit protein uL6">
    <location>
        <begin position="1"/>
        <end position="177"/>
    </location>
</feature>
<sequence length="177" mass="19478">MSRIGLKVIEVPAGVTVTKDGENNITVKGPKGELTRHFNPIIEMHEEGNLINFTRSSDSDRAMHGTMRANLNNMILGVTEGFKKTLDLIGVGYRAQLKGKTLVLNVGYSHPVEMEAPEGVNVEVPSNTNIIISGISKQKVGQFAAEIRDVRPPEPYKGKGIRYTDEHVRRKEGKTGK</sequence>
<comment type="function">
    <text evidence="1">This protein binds to the 23S rRNA, and is important in its secondary structure. It is located near the subunit interface in the base of the L7/L12 stalk, and near the tRNA binding site of the peptidyltransferase center.</text>
</comment>
<comment type="subunit">
    <text evidence="1">Part of the 50S ribosomal subunit.</text>
</comment>
<comment type="similarity">
    <text evidence="1">Belongs to the universal ribosomal protein uL6 family.</text>
</comment>
<proteinExistence type="inferred from homology"/>
<name>RL6_LATSS</name>
<protein>
    <recommendedName>
        <fullName evidence="1">Large ribosomal subunit protein uL6</fullName>
    </recommendedName>
    <alternativeName>
        <fullName evidence="2">50S ribosomal protein L6</fullName>
    </alternativeName>
</protein>
<reference key="1">
    <citation type="journal article" date="2005" name="Nat. Biotechnol.">
        <title>The complete genome sequence of the meat-borne lactic acid bacterium Lactobacillus sakei 23K.</title>
        <authorList>
            <person name="Chaillou S."/>
            <person name="Champomier-Verges M.-C."/>
            <person name="Cornet M."/>
            <person name="Crutz-Le Coq A.-M."/>
            <person name="Dudez A.-M."/>
            <person name="Martin V."/>
            <person name="Beaufils S."/>
            <person name="Darbon-Rongere E."/>
            <person name="Bossy R."/>
            <person name="Loux V."/>
            <person name="Zagorec M."/>
        </authorList>
    </citation>
    <scope>NUCLEOTIDE SEQUENCE [LARGE SCALE GENOMIC DNA]</scope>
    <source>
        <strain>23K</strain>
    </source>
</reference>
<organism>
    <name type="scientific">Latilactobacillus sakei subsp. sakei (strain 23K)</name>
    <name type="common">Lactobacillus sakei subsp. sakei</name>
    <dbReference type="NCBI Taxonomy" id="314315"/>
    <lineage>
        <taxon>Bacteria</taxon>
        <taxon>Bacillati</taxon>
        <taxon>Bacillota</taxon>
        <taxon>Bacilli</taxon>
        <taxon>Lactobacillales</taxon>
        <taxon>Lactobacillaceae</taxon>
        <taxon>Latilactobacillus</taxon>
    </lineage>
</organism>
<dbReference type="EMBL" id="CR936503">
    <property type="protein sequence ID" value="CAI56058.1"/>
    <property type="molecule type" value="Genomic_DNA"/>
</dbReference>
<dbReference type="RefSeq" id="WP_011375439.1">
    <property type="nucleotide sequence ID" value="NC_007576.1"/>
</dbReference>
<dbReference type="SMR" id="Q38US6"/>
<dbReference type="STRING" id="314315.LCA_1750"/>
<dbReference type="GeneID" id="57132666"/>
<dbReference type="KEGG" id="lsa:LCA_1750"/>
<dbReference type="eggNOG" id="COG0097">
    <property type="taxonomic scope" value="Bacteria"/>
</dbReference>
<dbReference type="HOGENOM" id="CLU_065464_1_2_9"/>
<dbReference type="OrthoDB" id="9805007at2"/>
<dbReference type="Proteomes" id="UP000002707">
    <property type="component" value="Chromosome"/>
</dbReference>
<dbReference type="GO" id="GO:0022625">
    <property type="term" value="C:cytosolic large ribosomal subunit"/>
    <property type="evidence" value="ECO:0007669"/>
    <property type="project" value="TreeGrafter"/>
</dbReference>
<dbReference type="GO" id="GO:0019843">
    <property type="term" value="F:rRNA binding"/>
    <property type="evidence" value="ECO:0007669"/>
    <property type="project" value="UniProtKB-UniRule"/>
</dbReference>
<dbReference type="GO" id="GO:0003735">
    <property type="term" value="F:structural constituent of ribosome"/>
    <property type="evidence" value="ECO:0007669"/>
    <property type="project" value="InterPro"/>
</dbReference>
<dbReference type="GO" id="GO:0002181">
    <property type="term" value="P:cytoplasmic translation"/>
    <property type="evidence" value="ECO:0007669"/>
    <property type="project" value="TreeGrafter"/>
</dbReference>
<dbReference type="FunFam" id="3.90.930.12:FF:000001">
    <property type="entry name" value="50S ribosomal protein L6"/>
    <property type="match status" value="1"/>
</dbReference>
<dbReference type="FunFam" id="3.90.930.12:FF:000002">
    <property type="entry name" value="50S ribosomal protein L6"/>
    <property type="match status" value="1"/>
</dbReference>
<dbReference type="Gene3D" id="3.90.930.12">
    <property type="entry name" value="Ribosomal protein L6, alpha-beta domain"/>
    <property type="match status" value="2"/>
</dbReference>
<dbReference type="HAMAP" id="MF_01365_B">
    <property type="entry name" value="Ribosomal_uL6_B"/>
    <property type="match status" value="1"/>
</dbReference>
<dbReference type="InterPro" id="IPR000702">
    <property type="entry name" value="Ribosomal_uL6-like"/>
</dbReference>
<dbReference type="InterPro" id="IPR036789">
    <property type="entry name" value="Ribosomal_uL6-like_a/b-dom_sf"/>
</dbReference>
<dbReference type="InterPro" id="IPR020040">
    <property type="entry name" value="Ribosomal_uL6_a/b-dom"/>
</dbReference>
<dbReference type="InterPro" id="IPR019906">
    <property type="entry name" value="Ribosomal_uL6_bac-type"/>
</dbReference>
<dbReference type="InterPro" id="IPR002358">
    <property type="entry name" value="Ribosomal_uL6_CS"/>
</dbReference>
<dbReference type="NCBIfam" id="TIGR03654">
    <property type="entry name" value="L6_bact"/>
    <property type="match status" value="1"/>
</dbReference>
<dbReference type="PANTHER" id="PTHR11655">
    <property type="entry name" value="60S/50S RIBOSOMAL PROTEIN L6/L9"/>
    <property type="match status" value="1"/>
</dbReference>
<dbReference type="PANTHER" id="PTHR11655:SF14">
    <property type="entry name" value="LARGE RIBOSOMAL SUBUNIT PROTEIN UL6M"/>
    <property type="match status" value="1"/>
</dbReference>
<dbReference type="Pfam" id="PF00347">
    <property type="entry name" value="Ribosomal_L6"/>
    <property type="match status" value="2"/>
</dbReference>
<dbReference type="PIRSF" id="PIRSF002162">
    <property type="entry name" value="Ribosomal_L6"/>
    <property type="match status" value="1"/>
</dbReference>
<dbReference type="PRINTS" id="PR00059">
    <property type="entry name" value="RIBOSOMALL6"/>
</dbReference>
<dbReference type="SUPFAM" id="SSF56053">
    <property type="entry name" value="Ribosomal protein L6"/>
    <property type="match status" value="2"/>
</dbReference>
<dbReference type="PROSITE" id="PS00525">
    <property type="entry name" value="RIBOSOMAL_L6_1"/>
    <property type="match status" value="1"/>
</dbReference>